<reference key="1">
    <citation type="journal article" date="2007" name="Proc. Natl. Acad. Sci. U.S.A.">
        <title>Deep-sea vent epsilon-proteobacterial genomes provide insights into emergence of pathogens.</title>
        <authorList>
            <person name="Nakagawa S."/>
            <person name="Takaki Y."/>
            <person name="Shimamura S."/>
            <person name="Reysenbach A.-L."/>
            <person name="Takai K."/>
            <person name="Horikoshi K."/>
        </authorList>
    </citation>
    <scope>NUCLEOTIDE SEQUENCE [LARGE SCALE GENOMIC DNA]</scope>
    <source>
        <strain>NBC37-1</strain>
    </source>
</reference>
<proteinExistence type="inferred from homology"/>
<name>Y2278_SULNB</name>
<protein>
    <recommendedName>
        <fullName evidence="1">Nucleoid-associated protein SUN_2278</fullName>
    </recommendedName>
</protein>
<keyword id="KW-0963">Cytoplasm</keyword>
<keyword id="KW-0238">DNA-binding</keyword>
<organism>
    <name type="scientific">Sulfurovum sp. (strain NBC37-1)</name>
    <dbReference type="NCBI Taxonomy" id="387093"/>
    <lineage>
        <taxon>Bacteria</taxon>
        <taxon>Pseudomonadati</taxon>
        <taxon>Campylobacterota</taxon>
        <taxon>Epsilonproteobacteria</taxon>
        <taxon>Campylobacterales</taxon>
        <taxon>Sulfurovaceae</taxon>
        <taxon>Sulfurovum</taxon>
    </lineage>
</organism>
<gene>
    <name type="ordered locus">SUN_2278</name>
</gene>
<feature type="chain" id="PRO_1000003850" description="Nucleoid-associated protein SUN_2278">
    <location>
        <begin position="1"/>
        <end position="103"/>
    </location>
</feature>
<accession>A6QCK9</accession>
<comment type="function">
    <text evidence="1">Binds to DNA and alters its conformation. May be involved in regulation of gene expression, nucleoid organization and DNA protection.</text>
</comment>
<comment type="subunit">
    <text evidence="1">Homodimer.</text>
</comment>
<comment type="subcellular location">
    <subcellularLocation>
        <location evidence="1">Cytoplasm</location>
        <location evidence="1">Nucleoid</location>
    </subcellularLocation>
</comment>
<comment type="similarity">
    <text evidence="1">Belongs to the YbaB/EbfC family.</text>
</comment>
<sequence>MFEGMDLGKMGKMMEQMQEKAKELQEQAKNVEFTAKAGGGLIEVTANGAGEVIDMNIDDSLLEDKESLQILLISAMNDVNKMIEDNKKSQAMGMMGGMNPFGS</sequence>
<dbReference type="EMBL" id="AP009179">
    <property type="protein sequence ID" value="BAF73218.1"/>
    <property type="molecule type" value="Genomic_DNA"/>
</dbReference>
<dbReference type="RefSeq" id="WP_012084056.1">
    <property type="nucleotide sequence ID" value="NC_009663.1"/>
</dbReference>
<dbReference type="SMR" id="A6QCK9"/>
<dbReference type="STRING" id="387093.SUN_2278"/>
<dbReference type="KEGG" id="sun:SUN_2278"/>
<dbReference type="eggNOG" id="COG0718">
    <property type="taxonomic scope" value="Bacteria"/>
</dbReference>
<dbReference type="HOGENOM" id="CLU_140930_2_1_7"/>
<dbReference type="OrthoDB" id="5343857at2"/>
<dbReference type="Proteomes" id="UP000006378">
    <property type="component" value="Chromosome"/>
</dbReference>
<dbReference type="GO" id="GO:0043590">
    <property type="term" value="C:bacterial nucleoid"/>
    <property type="evidence" value="ECO:0007669"/>
    <property type="project" value="UniProtKB-UniRule"/>
</dbReference>
<dbReference type="GO" id="GO:0005829">
    <property type="term" value="C:cytosol"/>
    <property type="evidence" value="ECO:0007669"/>
    <property type="project" value="TreeGrafter"/>
</dbReference>
<dbReference type="GO" id="GO:0003677">
    <property type="term" value="F:DNA binding"/>
    <property type="evidence" value="ECO:0007669"/>
    <property type="project" value="UniProtKB-UniRule"/>
</dbReference>
<dbReference type="Gene3D" id="3.30.1310.10">
    <property type="entry name" value="Nucleoid-associated protein YbaB-like domain"/>
    <property type="match status" value="1"/>
</dbReference>
<dbReference type="HAMAP" id="MF_00274">
    <property type="entry name" value="DNA_YbaB_EbfC"/>
    <property type="match status" value="1"/>
</dbReference>
<dbReference type="InterPro" id="IPR036894">
    <property type="entry name" value="YbaB-like_sf"/>
</dbReference>
<dbReference type="InterPro" id="IPR004401">
    <property type="entry name" value="YbaB/EbfC"/>
</dbReference>
<dbReference type="NCBIfam" id="TIGR00103">
    <property type="entry name" value="DNA_YbaB_EbfC"/>
    <property type="match status" value="1"/>
</dbReference>
<dbReference type="PANTHER" id="PTHR33449">
    <property type="entry name" value="NUCLEOID-ASSOCIATED PROTEIN YBAB"/>
    <property type="match status" value="1"/>
</dbReference>
<dbReference type="PANTHER" id="PTHR33449:SF1">
    <property type="entry name" value="NUCLEOID-ASSOCIATED PROTEIN YBAB"/>
    <property type="match status" value="1"/>
</dbReference>
<dbReference type="Pfam" id="PF02575">
    <property type="entry name" value="YbaB_DNA_bd"/>
    <property type="match status" value="1"/>
</dbReference>
<dbReference type="PIRSF" id="PIRSF004555">
    <property type="entry name" value="UCP004555"/>
    <property type="match status" value="1"/>
</dbReference>
<dbReference type="SUPFAM" id="SSF82607">
    <property type="entry name" value="YbaB-like"/>
    <property type="match status" value="1"/>
</dbReference>
<evidence type="ECO:0000255" key="1">
    <source>
        <dbReference type="HAMAP-Rule" id="MF_00274"/>
    </source>
</evidence>